<organism>
    <name type="scientific">Escherichia coli O7:K1 (strain IAI39 / ExPEC)</name>
    <dbReference type="NCBI Taxonomy" id="585057"/>
    <lineage>
        <taxon>Bacteria</taxon>
        <taxon>Pseudomonadati</taxon>
        <taxon>Pseudomonadota</taxon>
        <taxon>Gammaproteobacteria</taxon>
        <taxon>Enterobacterales</taxon>
        <taxon>Enterobacteriaceae</taxon>
        <taxon>Escherichia</taxon>
    </lineage>
</organism>
<comment type="function">
    <text evidence="1">This protein is involved in the repair of mismatches in DNA. It is possible that it carries out the mismatch recognition step. This protein has a weak ATPase activity.</text>
</comment>
<comment type="similarity">
    <text evidence="1">Belongs to the DNA mismatch repair MutS family.</text>
</comment>
<gene>
    <name evidence="1" type="primary">mutS</name>
    <name type="ordered locus">ECIAI39_2923</name>
</gene>
<accession>B7NT79</accession>
<dbReference type="EMBL" id="CU928164">
    <property type="protein sequence ID" value="CAR19043.1"/>
    <property type="molecule type" value="Genomic_DNA"/>
</dbReference>
<dbReference type="RefSeq" id="WP_001272888.1">
    <property type="nucleotide sequence ID" value="NC_011750.1"/>
</dbReference>
<dbReference type="RefSeq" id="YP_002408855.1">
    <property type="nucleotide sequence ID" value="NC_011750.1"/>
</dbReference>
<dbReference type="SMR" id="B7NT79"/>
<dbReference type="STRING" id="585057.ECIAI39_2923"/>
<dbReference type="KEGG" id="ect:ECIAI39_2923"/>
<dbReference type="PATRIC" id="fig|585057.6.peg.3032"/>
<dbReference type="HOGENOM" id="CLU_002472_4_0_6"/>
<dbReference type="Proteomes" id="UP000000749">
    <property type="component" value="Chromosome"/>
</dbReference>
<dbReference type="GO" id="GO:0005829">
    <property type="term" value="C:cytosol"/>
    <property type="evidence" value="ECO:0007669"/>
    <property type="project" value="TreeGrafter"/>
</dbReference>
<dbReference type="GO" id="GO:0005524">
    <property type="term" value="F:ATP binding"/>
    <property type="evidence" value="ECO:0007669"/>
    <property type="project" value="UniProtKB-UniRule"/>
</dbReference>
<dbReference type="GO" id="GO:0140664">
    <property type="term" value="F:ATP-dependent DNA damage sensor activity"/>
    <property type="evidence" value="ECO:0007669"/>
    <property type="project" value="InterPro"/>
</dbReference>
<dbReference type="GO" id="GO:0003684">
    <property type="term" value="F:damaged DNA binding"/>
    <property type="evidence" value="ECO:0007669"/>
    <property type="project" value="UniProtKB-UniRule"/>
</dbReference>
<dbReference type="GO" id="GO:0030983">
    <property type="term" value="F:mismatched DNA binding"/>
    <property type="evidence" value="ECO:0007669"/>
    <property type="project" value="InterPro"/>
</dbReference>
<dbReference type="GO" id="GO:0006298">
    <property type="term" value="P:mismatch repair"/>
    <property type="evidence" value="ECO:0007669"/>
    <property type="project" value="UniProtKB-UniRule"/>
</dbReference>
<dbReference type="CDD" id="cd03284">
    <property type="entry name" value="ABC_MutS1"/>
    <property type="match status" value="1"/>
</dbReference>
<dbReference type="FunFam" id="1.10.1420.10:FF:000002">
    <property type="entry name" value="DNA mismatch repair protein MutS"/>
    <property type="match status" value="1"/>
</dbReference>
<dbReference type="FunFam" id="3.30.420.110:FF:000001">
    <property type="entry name" value="DNA mismatch repair protein MutS"/>
    <property type="match status" value="1"/>
</dbReference>
<dbReference type="FunFam" id="3.40.1170.10:FF:000001">
    <property type="entry name" value="DNA mismatch repair protein MutS"/>
    <property type="match status" value="1"/>
</dbReference>
<dbReference type="FunFam" id="3.40.50.300:FF:000283">
    <property type="entry name" value="DNA mismatch repair protein MutS"/>
    <property type="match status" value="1"/>
</dbReference>
<dbReference type="Gene3D" id="1.10.1420.10">
    <property type="match status" value="2"/>
</dbReference>
<dbReference type="Gene3D" id="6.10.140.430">
    <property type="match status" value="1"/>
</dbReference>
<dbReference type="Gene3D" id="3.40.1170.10">
    <property type="entry name" value="DNA repair protein MutS, domain I"/>
    <property type="match status" value="1"/>
</dbReference>
<dbReference type="Gene3D" id="3.30.420.110">
    <property type="entry name" value="MutS, connector domain"/>
    <property type="match status" value="1"/>
</dbReference>
<dbReference type="Gene3D" id="3.40.50.300">
    <property type="entry name" value="P-loop containing nucleotide triphosphate hydrolases"/>
    <property type="match status" value="1"/>
</dbReference>
<dbReference type="HAMAP" id="MF_00096">
    <property type="entry name" value="MutS"/>
    <property type="match status" value="1"/>
</dbReference>
<dbReference type="InterPro" id="IPR005748">
    <property type="entry name" value="DNA_mismatch_repair_MutS"/>
</dbReference>
<dbReference type="InterPro" id="IPR007695">
    <property type="entry name" value="DNA_mismatch_repair_MutS-lik_N"/>
</dbReference>
<dbReference type="InterPro" id="IPR017261">
    <property type="entry name" value="DNA_mismatch_repair_MutS/MSH"/>
</dbReference>
<dbReference type="InterPro" id="IPR000432">
    <property type="entry name" value="DNA_mismatch_repair_MutS_C"/>
</dbReference>
<dbReference type="InterPro" id="IPR007861">
    <property type="entry name" value="DNA_mismatch_repair_MutS_clamp"/>
</dbReference>
<dbReference type="InterPro" id="IPR007696">
    <property type="entry name" value="DNA_mismatch_repair_MutS_core"/>
</dbReference>
<dbReference type="InterPro" id="IPR016151">
    <property type="entry name" value="DNA_mismatch_repair_MutS_N"/>
</dbReference>
<dbReference type="InterPro" id="IPR036187">
    <property type="entry name" value="DNA_mismatch_repair_MutS_sf"/>
</dbReference>
<dbReference type="InterPro" id="IPR007860">
    <property type="entry name" value="DNA_mmatch_repair_MutS_con_dom"/>
</dbReference>
<dbReference type="InterPro" id="IPR045076">
    <property type="entry name" value="MutS"/>
</dbReference>
<dbReference type="InterPro" id="IPR036678">
    <property type="entry name" value="MutS_con_dom_sf"/>
</dbReference>
<dbReference type="InterPro" id="IPR027417">
    <property type="entry name" value="P-loop_NTPase"/>
</dbReference>
<dbReference type="NCBIfam" id="TIGR01070">
    <property type="entry name" value="mutS1"/>
    <property type="match status" value="1"/>
</dbReference>
<dbReference type="NCBIfam" id="NF003810">
    <property type="entry name" value="PRK05399.1"/>
    <property type="match status" value="1"/>
</dbReference>
<dbReference type="PANTHER" id="PTHR11361:SF34">
    <property type="entry name" value="DNA MISMATCH REPAIR PROTEIN MSH1, MITOCHONDRIAL"/>
    <property type="match status" value="1"/>
</dbReference>
<dbReference type="PANTHER" id="PTHR11361">
    <property type="entry name" value="DNA MISMATCH REPAIR PROTEIN MUTS FAMILY MEMBER"/>
    <property type="match status" value="1"/>
</dbReference>
<dbReference type="Pfam" id="PF01624">
    <property type="entry name" value="MutS_I"/>
    <property type="match status" value="1"/>
</dbReference>
<dbReference type="Pfam" id="PF05188">
    <property type="entry name" value="MutS_II"/>
    <property type="match status" value="1"/>
</dbReference>
<dbReference type="Pfam" id="PF05192">
    <property type="entry name" value="MutS_III"/>
    <property type="match status" value="1"/>
</dbReference>
<dbReference type="Pfam" id="PF05190">
    <property type="entry name" value="MutS_IV"/>
    <property type="match status" value="1"/>
</dbReference>
<dbReference type="Pfam" id="PF00488">
    <property type="entry name" value="MutS_V"/>
    <property type="match status" value="1"/>
</dbReference>
<dbReference type="PIRSF" id="PIRSF037677">
    <property type="entry name" value="DNA_mis_repair_Msh6"/>
    <property type="match status" value="1"/>
</dbReference>
<dbReference type="SMART" id="SM00534">
    <property type="entry name" value="MUTSac"/>
    <property type="match status" value="1"/>
</dbReference>
<dbReference type="SMART" id="SM00533">
    <property type="entry name" value="MUTSd"/>
    <property type="match status" value="1"/>
</dbReference>
<dbReference type="SUPFAM" id="SSF55271">
    <property type="entry name" value="DNA repair protein MutS, domain I"/>
    <property type="match status" value="1"/>
</dbReference>
<dbReference type="SUPFAM" id="SSF53150">
    <property type="entry name" value="DNA repair protein MutS, domain II"/>
    <property type="match status" value="1"/>
</dbReference>
<dbReference type="SUPFAM" id="SSF48334">
    <property type="entry name" value="DNA repair protein MutS, domain III"/>
    <property type="match status" value="1"/>
</dbReference>
<dbReference type="SUPFAM" id="SSF52540">
    <property type="entry name" value="P-loop containing nucleoside triphosphate hydrolases"/>
    <property type="match status" value="1"/>
</dbReference>
<dbReference type="PROSITE" id="PS00486">
    <property type="entry name" value="DNA_MISMATCH_REPAIR_2"/>
    <property type="match status" value="1"/>
</dbReference>
<feature type="chain" id="PRO_1000117284" description="DNA mismatch repair protein MutS">
    <location>
        <begin position="1"/>
        <end position="853"/>
    </location>
</feature>
<feature type="binding site" evidence="1">
    <location>
        <begin position="614"/>
        <end position="621"/>
    </location>
    <ligand>
        <name>ATP</name>
        <dbReference type="ChEBI" id="CHEBI:30616"/>
    </ligand>
</feature>
<sequence>MSAIENFDAHTPMMQQYLKLKAQHPEILLFYRMGDFYELFYDDAKRASQLLDISLTKRGASAGEPIPMAGIPYHAVENYLAKLVNQGESVAICEQIGDPATSKGPVERKVVRIVTPGTISDEALLQERQDNLLAAIWQDSKGFGYATLDISSGRFRLSEPADRETMAAELQRTNPAELLYAEDFAEMSLIEGRRGLRRRPLWEFEIDTARQQLNLQFGTRDLVGFGVENAPRGLCAAGCLLQYAKDTQRTTLPHIRSITMEREQDSIIMDAATRRNLEITQNLAGGAENTLASVLDCTVTPMGSRMLKRWLHMPVRDTRVLLERQQTIGALQDFTAELQPVLRQVGDLERILARLALRTARPRDLARMRHAFQQLPELRALLENVDSAPVQALREKMGEFAELRDLLERAIIDTPPVLVRDGGVIAPGYNEELDEWRALADGATDYLERLEVRERERTGLDTLKVGFNAVHGYYIQISRGQSHLAPINYMRRQTLKNAERYIIPELKEYEDKVLTSKGKALALEKQLYEELFDLLLPHLEALQQSASALAELDVLVNLAERAYTLNYTCPTFIDKPGIRITEGRHPVVEQVLNEPFIANPLNLSPQRRMLIITGPNMGGKSTYMRQTALIALMAYIGSYVPAQKVEIGPIDRIFTRVGAADDLASGRSTFMVEMTETANILHNATEYSLVLMDEIGRGTSTYDGLSLAWACAENLANKIKALTLFATHYFELTQLPEKMEGVANVHLDALEHGDTIAFMHSVQDGAASKSYGLAVAALAGVPKEVIKRARQKLRELESISPNAAATQVDGTQMSLLSVQEETSPAVEALENLDPDSLTPRQALEWIYRLKSLV</sequence>
<reference key="1">
    <citation type="journal article" date="2009" name="PLoS Genet.">
        <title>Organised genome dynamics in the Escherichia coli species results in highly diverse adaptive paths.</title>
        <authorList>
            <person name="Touchon M."/>
            <person name="Hoede C."/>
            <person name="Tenaillon O."/>
            <person name="Barbe V."/>
            <person name="Baeriswyl S."/>
            <person name="Bidet P."/>
            <person name="Bingen E."/>
            <person name="Bonacorsi S."/>
            <person name="Bouchier C."/>
            <person name="Bouvet O."/>
            <person name="Calteau A."/>
            <person name="Chiapello H."/>
            <person name="Clermont O."/>
            <person name="Cruveiller S."/>
            <person name="Danchin A."/>
            <person name="Diard M."/>
            <person name="Dossat C."/>
            <person name="Karoui M.E."/>
            <person name="Frapy E."/>
            <person name="Garry L."/>
            <person name="Ghigo J.M."/>
            <person name="Gilles A.M."/>
            <person name="Johnson J."/>
            <person name="Le Bouguenec C."/>
            <person name="Lescat M."/>
            <person name="Mangenot S."/>
            <person name="Martinez-Jehanne V."/>
            <person name="Matic I."/>
            <person name="Nassif X."/>
            <person name="Oztas S."/>
            <person name="Petit M.A."/>
            <person name="Pichon C."/>
            <person name="Rouy Z."/>
            <person name="Ruf C.S."/>
            <person name="Schneider D."/>
            <person name="Tourret J."/>
            <person name="Vacherie B."/>
            <person name="Vallenet D."/>
            <person name="Medigue C."/>
            <person name="Rocha E.P.C."/>
            <person name="Denamur E."/>
        </authorList>
    </citation>
    <scope>NUCLEOTIDE SEQUENCE [LARGE SCALE GENOMIC DNA]</scope>
    <source>
        <strain>IAI39 / ExPEC</strain>
    </source>
</reference>
<evidence type="ECO:0000255" key="1">
    <source>
        <dbReference type="HAMAP-Rule" id="MF_00096"/>
    </source>
</evidence>
<name>MUTS_ECO7I</name>
<keyword id="KW-0067">ATP-binding</keyword>
<keyword id="KW-0227">DNA damage</keyword>
<keyword id="KW-0234">DNA repair</keyword>
<keyword id="KW-0238">DNA-binding</keyword>
<keyword id="KW-0547">Nucleotide-binding</keyword>
<protein>
    <recommendedName>
        <fullName evidence="1">DNA mismatch repair protein MutS</fullName>
    </recommendedName>
</protein>
<proteinExistence type="inferred from homology"/>